<gene>
    <name type="primary">Ctdsp2</name>
</gene>
<sequence length="270" mass="30546">MEHGSIITQARREDALVLTKQGLVSKSSPKKPRGRSIFKALLCCFHTQHVVQSSSSTELTHKEEANTIAKSDLLQCLQYQFYQIPGTCLLPEVTEQDQGRICVVIDLDETLVHSSFKPINNADFIVPVEIEGTTHQVYVLKRPYVDEFLRRMGELFECVLFTASLAKYADPVTDLLDRCGVFRARLFREACVFHQGCYVKDLSRLGRDLRKTVILDNSPASYIFHPENAVPVQSWFDDMADTELLNLIPVFEELSGTDDVYTSLGQLRAP</sequence>
<keyword id="KW-0378">Hydrolase</keyword>
<keyword id="KW-0460">Magnesium</keyword>
<keyword id="KW-0479">Metal-binding</keyword>
<keyword id="KW-0539">Nucleus</keyword>
<keyword id="KW-0597">Phosphoprotein</keyword>
<keyword id="KW-0904">Protein phosphatase</keyword>
<keyword id="KW-1185">Reference proteome</keyword>
<reference key="1">
    <citation type="journal article" date="2005" name="Science">
        <title>The transcriptional landscape of the mammalian genome.</title>
        <authorList>
            <person name="Carninci P."/>
            <person name="Kasukawa T."/>
            <person name="Katayama S."/>
            <person name="Gough J."/>
            <person name="Frith M.C."/>
            <person name="Maeda N."/>
            <person name="Oyama R."/>
            <person name="Ravasi T."/>
            <person name="Lenhard B."/>
            <person name="Wells C."/>
            <person name="Kodzius R."/>
            <person name="Shimokawa K."/>
            <person name="Bajic V.B."/>
            <person name="Brenner S.E."/>
            <person name="Batalov S."/>
            <person name="Forrest A.R."/>
            <person name="Zavolan M."/>
            <person name="Davis M.J."/>
            <person name="Wilming L.G."/>
            <person name="Aidinis V."/>
            <person name="Allen J.E."/>
            <person name="Ambesi-Impiombato A."/>
            <person name="Apweiler R."/>
            <person name="Aturaliya R.N."/>
            <person name="Bailey T.L."/>
            <person name="Bansal M."/>
            <person name="Baxter L."/>
            <person name="Beisel K.W."/>
            <person name="Bersano T."/>
            <person name="Bono H."/>
            <person name="Chalk A.M."/>
            <person name="Chiu K.P."/>
            <person name="Choudhary V."/>
            <person name="Christoffels A."/>
            <person name="Clutterbuck D.R."/>
            <person name="Crowe M.L."/>
            <person name="Dalla E."/>
            <person name="Dalrymple B.P."/>
            <person name="de Bono B."/>
            <person name="Della Gatta G."/>
            <person name="di Bernardo D."/>
            <person name="Down T."/>
            <person name="Engstrom P."/>
            <person name="Fagiolini M."/>
            <person name="Faulkner G."/>
            <person name="Fletcher C.F."/>
            <person name="Fukushima T."/>
            <person name="Furuno M."/>
            <person name="Futaki S."/>
            <person name="Gariboldi M."/>
            <person name="Georgii-Hemming P."/>
            <person name="Gingeras T.R."/>
            <person name="Gojobori T."/>
            <person name="Green R.E."/>
            <person name="Gustincich S."/>
            <person name="Harbers M."/>
            <person name="Hayashi Y."/>
            <person name="Hensch T.K."/>
            <person name="Hirokawa N."/>
            <person name="Hill D."/>
            <person name="Huminiecki L."/>
            <person name="Iacono M."/>
            <person name="Ikeo K."/>
            <person name="Iwama A."/>
            <person name="Ishikawa T."/>
            <person name="Jakt M."/>
            <person name="Kanapin A."/>
            <person name="Katoh M."/>
            <person name="Kawasawa Y."/>
            <person name="Kelso J."/>
            <person name="Kitamura H."/>
            <person name="Kitano H."/>
            <person name="Kollias G."/>
            <person name="Krishnan S.P."/>
            <person name="Kruger A."/>
            <person name="Kummerfeld S.K."/>
            <person name="Kurochkin I.V."/>
            <person name="Lareau L.F."/>
            <person name="Lazarevic D."/>
            <person name="Lipovich L."/>
            <person name="Liu J."/>
            <person name="Liuni S."/>
            <person name="McWilliam S."/>
            <person name="Madan Babu M."/>
            <person name="Madera M."/>
            <person name="Marchionni L."/>
            <person name="Matsuda H."/>
            <person name="Matsuzawa S."/>
            <person name="Miki H."/>
            <person name="Mignone F."/>
            <person name="Miyake S."/>
            <person name="Morris K."/>
            <person name="Mottagui-Tabar S."/>
            <person name="Mulder N."/>
            <person name="Nakano N."/>
            <person name="Nakauchi H."/>
            <person name="Ng P."/>
            <person name="Nilsson R."/>
            <person name="Nishiguchi S."/>
            <person name="Nishikawa S."/>
            <person name="Nori F."/>
            <person name="Ohara O."/>
            <person name="Okazaki Y."/>
            <person name="Orlando V."/>
            <person name="Pang K.C."/>
            <person name="Pavan W.J."/>
            <person name="Pavesi G."/>
            <person name="Pesole G."/>
            <person name="Petrovsky N."/>
            <person name="Piazza S."/>
            <person name="Reed J."/>
            <person name="Reid J.F."/>
            <person name="Ring B.Z."/>
            <person name="Ringwald M."/>
            <person name="Rost B."/>
            <person name="Ruan Y."/>
            <person name="Salzberg S.L."/>
            <person name="Sandelin A."/>
            <person name="Schneider C."/>
            <person name="Schoenbach C."/>
            <person name="Sekiguchi K."/>
            <person name="Semple C.A."/>
            <person name="Seno S."/>
            <person name="Sessa L."/>
            <person name="Sheng Y."/>
            <person name="Shibata Y."/>
            <person name="Shimada H."/>
            <person name="Shimada K."/>
            <person name="Silva D."/>
            <person name="Sinclair B."/>
            <person name="Sperling S."/>
            <person name="Stupka E."/>
            <person name="Sugiura K."/>
            <person name="Sultana R."/>
            <person name="Takenaka Y."/>
            <person name="Taki K."/>
            <person name="Tammoja K."/>
            <person name="Tan S.L."/>
            <person name="Tang S."/>
            <person name="Taylor M.S."/>
            <person name="Tegner J."/>
            <person name="Teichmann S.A."/>
            <person name="Ueda H.R."/>
            <person name="van Nimwegen E."/>
            <person name="Verardo R."/>
            <person name="Wei C.L."/>
            <person name="Yagi K."/>
            <person name="Yamanishi H."/>
            <person name="Zabarovsky E."/>
            <person name="Zhu S."/>
            <person name="Zimmer A."/>
            <person name="Hide W."/>
            <person name="Bult C."/>
            <person name="Grimmond S.M."/>
            <person name="Teasdale R.D."/>
            <person name="Liu E.T."/>
            <person name="Brusic V."/>
            <person name="Quackenbush J."/>
            <person name="Wahlestedt C."/>
            <person name="Mattick J.S."/>
            <person name="Hume D.A."/>
            <person name="Kai C."/>
            <person name="Sasaki D."/>
            <person name="Tomaru Y."/>
            <person name="Fukuda S."/>
            <person name="Kanamori-Katayama M."/>
            <person name="Suzuki M."/>
            <person name="Aoki J."/>
            <person name="Arakawa T."/>
            <person name="Iida J."/>
            <person name="Imamura K."/>
            <person name="Itoh M."/>
            <person name="Kato T."/>
            <person name="Kawaji H."/>
            <person name="Kawagashira N."/>
            <person name="Kawashima T."/>
            <person name="Kojima M."/>
            <person name="Kondo S."/>
            <person name="Konno H."/>
            <person name="Nakano K."/>
            <person name="Ninomiya N."/>
            <person name="Nishio T."/>
            <person name="Okada M."/>
            <person name="Plessy C."/>
            <person name="Shibata K."/>
            <person name="Shiraki T."/>
            <person name="Suzuki S."/>
            <person name="Tagami M."/>
            <person name="Waki K."/>
            <person name="Watahiki A."/>
            <person name="Okamura-Oho Y."/>
            <person name="Suzuki H."/>
            <person name="Kawai J."/>
            <person name="Hayashizaki Y."/>
        </authorList>
    </citation>
    <scope>NUCLEOTIDE SEQUENCE [LARGE SCALE MRNA]</scope>
    <source>
        <strain>C57BL/6J</strain>
    </source>
</reference>
<reference key="2">
    <citation type="journal article" date="2004" name="Genome Res.">
        <title>The status, quality, and expansion of the NIH full-length cDNA project: the Mammalian Gene Collection (MGC).</title>
        <authorList>
            <consortium name="The MGC Project Team"/>
        </authorList>
    </citation>
    <scope>NUCLEOTIDE SEQUENCE [LARGE SCALE MRNA]</scope>
    <source>
        <strain>C57BL/6J</strain>
        <tissue>Brain</tissue>
    </source>
</reference>
<reference key="3">
    <citation type="journal article" date="2005" name="Science">
        <title>Small CTD phosphatases function in silencing neuronal gene expression.</title>
        <authorList>
            <person name="Yeo M."/>
            <person name="Lee S.-K."/>
            <person name="Lee B."/>
            <person name="Ruiz E.C."/>
            <person name="Pfaff S.L."/>
            <person name="Gill G.N."/>
        </authorList>
    </citation>
    <scope>TISSUE SPECIFICITY</scope>
</reference>
<proteinExistence type="evidence at transcript level"/>
<dbReference type="EC" id="3.1.3.16"/>
<dbReference type="EMBL" id="AK049271">
    <property type="protein sequence ID" value="BAC33649.1"/>
    <property type="molecule type" value="mRNA"/>
</dbReference>
<dbReference type="EMBL" id="BC085142">
    <property type="protein sequence ID" value="AAH85142.1"/>
    <property type="molecule type" value="mRNA"/>
</dbReference>
<dbReference type="CCDS" id="CCDS48711.1"/>
<dbReference type="RefSeq" id="NP_001106941.1">
    <property type="nucleotide sequence ID" value="NM_001113470.1"/>
</dbReference>
<dbReference type="RefSeq" id="NP_666124.1">
    <property type="nucleotide sequence ID" value="NM_146012.2"/>
</dbReference>
<dbReference type="SMR" id="Q8BX07"/>
<dbReference type="FunCoup" id="Q8BX07">
    <property type="interactions" value="24"/>
</dbReference>
<dbReference type="STRING" id="10090.ENSMUSP00000100891"/>
<dbReference type="PhosphoSitePlus" id="Q8BX07"/>
<dbReference type="SwissPalm" id="Q8BX07"/>
<dbReference type="PaxDb" id="10090-ENSMUSP00000100891"/>
<dbReference type="ProteomicsDB" id="285216"/>
<dbReference type="Pumba" id="Q8BX07"/>
<dbReference type="Antibodypedia" id="8503">
    <property type="antibodies" value="299 antibodies from 28 providers"/>
</dbReference>
<dbReference type="Ensembl" id="ENSMUST00000105256.10">
    <property type="protein sequence ID" value="ENSMUSP00000100891.3"/>
    <property type="gene ID" value="ENSMUSG00000078429.10"/>
</dbReference>
<dbReference type="GeneID" id="52468"/>
<dbReference type="KEGG" id="mmu:52468"/>
<dbReference type="UCSC" id="uc007hhj.2">
    <property type="organism name" value="mouse"/>
</dbReference>
<dbReference type="AGR" id="MGI:1098748"/>
<dbReference type="CTD" id="10106"/>
<dbReference type="MGI" id="MGI:1098748">
    <property type="gene designation" value="Ctdsp2"/>
</dbReference>
<dbReference type="VEuPathDB" id="HostDB:ENSMUSG00000078429"/>
<dbReference type="eggNOG" id="KOG1605">
    <property type="taxonomic scope" value="Eukaryota"/>
</dbReference>
<dbReference type="GeneTree" id="ENSGT01040000240451"/>
<dbReference type="HOGENOM" id="CLU_020262_4_0_1"/>
<dbReference type="InParanoid" id="Q8BX07"/>
<dbReference type="OMA" id="ANTIAKX"/>
<dbReference type="OrthoDB" id="277011at2759"/>
<dbReference type="PhylomeDB" id="Q8BX07"/>
<dbReference type="TreeFam" id="TF313556"/>
<dbReference type="BioGRID-ORCS" id="52468">
    <property type="hits" value="6 hits in 75 CRISPR screens"/>
</dbReference>
<dbReference type="ChiTaRS" id="Ctdsp2">
    <property type="organism name" value="mouse"/>
</dbReference>
<dbReference type="PRO" id="PR:Q8BX07"/>
<dbReference type="Proteomes" id="UP000000589">
    <property type="component" value="Chromosome 10"/>
</dbReference>
<dbReference type="RNAct" id="Q8BX07">
    <property type="molecule type" value="protein"/>
</dbReference>
<dbReference type="Bgee" id="ENSMUSG00000078429">
    <property type="expression patterns" value="Expressed in ventricular zone and 73 other cell types or tissues"/>
</dbReference>
<dbReference type="ExpressionAtlas" id="Q8BX07">
    <property type="expression patterns" value="baseline and differential"/>
</dbReference>
<dbReference type="GO" id="GO:0005634">
    <property type="term" value="C:nucleus"/>
    <property type="evidence" value="ECO:0007669"/>
    <property type="project" value="UniProtKB-SubCell"/>
</dbReference>
<dbReference type="GO" id="GO:0046872">
    <property type="term" value="F:metal ion binding"/>
    <property type="evidence" value="ECO:0007669"/>
    <property type="project" value="UniProtKB-KW"/>
</dbReference>
<dbReference type="GO" id="GO:0008420">
    <property type="term" value="F:RNA polymerase II CTD heptapeptide repeat phosphatase activity"/>
    <property type="evidence" value="ECO:0007669"/>
    <property type="project" value="Ensembl"/>
</dbReference>
<dbReference type="GO" id="GO:2000134">
    <property type="term" value="P:negative regulation of G1/S transition of mitotic cell cycle"/>
    <property type="evidence" value="ECO:0000314"/>
    <property type="project" value="MGI"/>
</dbReference>
<dbReference type="CDD" id="cd07521">
    <property type="entry name" value="HAD_FCP1-like"/>
    <property type="match status" value="1"/>
</dbReference>
<dbReference type="FunFam" id="3.40.50.1000:FF:000013">
    <property type="entry name" value="Carboxy-terminal domain RNA polymerase II polypeptide A small"/>
    <property type="match status" value="1"/>
</dbReference>
<dbReference type="Gene3D" id="3.40.50.1000">
    <property type="entry name" value="HAD superfamily/HAD-like"/>
    <property type="match status" value="1"/>
</dbReference>
<dbReference type="InterPro" id="IPR011948">
    <property type="entry name" value="Dullard_phosphatase"/>
</dbReference>
<dbReference type="InterPro" id="IPR004274">
    <property type="entry name" value="FCP1_dom"/>
</dbReference>
<dbReference type="InterPro" id="IPR036412">
    <property type="entry name" value="HAD-like_sf"/>
</dbReference>
<dbReference type="InterPro" id="IPR023214">
    <property type="entry name" value="HAD_sf"/>
</dbReference>
<dbReference type="InterPro" id="IPR040078">
    <property type="entry name" value="RNA_Pol_CTD_Phosphatase"/>
</dbReference>
<dbReference type="InterPro" id="IPR050365">
    <property type="entry name" value="TIM50"/>
</dbReference>
<dbReference type="NCBIfam" id="TIGR02251">
    <property type="entry name" value="HIF-SF_euk"/>
    <property type="match status" value="1"/>
</dbReference>
<dbReference type="PANTHER" id="PTHR12210">
    <property type="entry name" value="DULLARD PROTEIN PHOSPHATASE"/>
    <property type="match status" value="1"/>
</dbReference>
<dbReference type="Pfam" id="PF03031">
    <property type="entry name" value="NIF"/>
    <property type="match status" value="1"/>
</dbReference>
<dbReference type="SFLD" id="SFLDG01124">
    <property type="entry name" value="C0.1:_RNA_Pol_CTD_Phosphatase"/>
    <property type="match status" value="1"/>
</dbReference>
<dbReference type="SFLD" id="SFLDS00003">
    <property type="entry name" value="Haloacid_Dehalogenase"/>
    <property type="match status" value="1"/>
</dbReference>
<dbReference type="SMART" id="SM00577">
    <property type="entry name" value="CPDc"/>
    <property type="match status" value="1"/>
</dbReference>
<dbReference type="SUPFAM" id="SSF56784">
    <property type="entry name" value="HAD-like"/>
    <property type="match status" value="1"/>
</dbReference>
<dbReference type="PROSITE" id="PS50969">
    <property type="entry name" value="FCP1"/>
    <property type="match status" value="1"/>
</dbReference>
<feature type="chain" id="PRO_0000212575" description="Carboxy-terminal domain RNA polymerase II polypeptide A small phosphatase 2">
    <location>
        <begin position="1"/>
        <end position="270"/>
    </location>
</feature>
<feature type="domain" description="FCP1 homology" evidence="3">
    <location>
        <begin position="96"/>
        <end position="254"/>
    </location>
</feature>
<feature type="active site" description="4-aspartylphosphate intermediate" evidence="1">
    <location>
        <position position="106"/>
    </location>
</feature>
<feature type="active site" description="Proton donor" evidence="1">
    <location>
        <position position="108"/>
    </location>
</feature>
<feature type="binding site" evidence="1">
    <location>
        <position position="106"/>
    </location>
    <ligand>
        <name>Mg(2+)</name>
        <dbReference type="ChEBI" id="CHEBI:18420"/>
    </ligand>
</feature>
<feature type="binding site" evidence="1">
    <location>
        <position position="108"/>
    </location>
    <ligand>
        <name>Mg(2+)</name>
        <dbReference type="ChEBI" id="CHEBI:18420"/>
    </ligand>
</feature>
<feature type="binding site" evidence="1">
    <location>
        <position position="217"/>
    </location>
    <ligand>
        <name>Mg(2+)</name>
        <dbReference type="ChEBI" id="CHEBI:18420"/>
    </ligand>
</feature>
<feature type="site" description="Transition state stabilizer" evidence="1">
    <location>
        <position position="162"/>
    </location>
</feature>
<feature type="site" description="Transition state stabilizer" evidence="1">
    <location>
        <position position="200"/>
    </location>
</feature>
<feature type="modified residue" description="Phosphoserine" evidence="2">
    <location>
        <position position="5"/>
    </location>
</feature>
<evidence type="ECO:0000250" key="1"/>
<evidence type="ECO:0000250" key="2">
    <source>
        <dbReference type="UniProtKB" id="O14595"/>
    </source>
</evidence>
<evidence type="ECO:0000255" key="3">
    <source>
        <dbReference type="PROSITE-ProRule" id="PRU00336"/>
    </source>
</evidence>
<evidence type="ECO:0000269" key="4">
    <source>
    </source>
</evidence>
<protein>
    <recommendedName>
        <fullName>Carboxy-terminal domain RNA polymerase II polypeptide A small phosphatase 2</fullName>
        <ecNumber>3.1.3.16</ecNumber>
    </recommendedName>
    <alternativeName>
        <fullName>Small C-terminal domain phosphatase 2</fullName>
    </alternativeName>
    <alternativeName>
        <fullName>Small CTD phosphatase 2</fullName>
        <shortName>SCP2</shortName>
    </alternativeName>
</protein>
<organism>
    <name type="scientific">Mus musculus</name>
    <name type="common">Mouse</name>
    <dbReference type="NCBI Taxonomy" id="10090"/>
    <lineage>
        <taxon>Eukaryota</taxon>
        <taxon>Metazoa</taxon>
        <taxon>Chordata</taxon>
        <taxon>Craniata</taxon>
        <taxon>Vertebrata</taxon>
        <taxon>Euteleostomi</taxon>
        <taxon>Mammalia</taxon>
        <taxon>Eutheria</taxon>
        <taxon>Euarchontoglires</taxon>
        <taxon>Glires</taxon>
        <taxon>Rodentia</taxon>
        <taxon>Myomorpha</taxon>
        <taxon>Muroidea</taxon>
        <taxon>Muridae</taxon>
        <taxon>Murinae</taxon>
        <taxon>Mus</taxon>
        <taxon>Mus</taxon>
    </lineage>
</organism>
<name>CTDS2_MOUSE</name>
<accession>Q8BX07</accession>
<comment type="function">
    <text evidence="1">Preferentially catalyzes the dephosphorylation of 'Ser-5' within the tandem 7 residue repeats in the C-terminal domain (CTD) of the largest RNA polymerase II subunit POLR2A. Negatively regulates RNA polymerase II transcription, possibly by controlling the transition from initiation/capping to processive transcript elongation. Recruited by REST to neuronal genes that contain RE-1 elements, leading to neuronal gene silencing in non-neuronal cells (By similarity).</text>
</comment>
<comment type="catalytic activity">
    <reaction>
        <text>O-phospho-L-seryl-[protein] + H2O = L-seryl-[protein] + phosphate</text>
        <dbReference type="Rhea" id="RHEA:20629"/>
        <dbReference type="Rhea" id="RHEA-COMP:9863"/>
        <dbReference type="Rhea" id="RHEA-COMP:11604"/>
        <dbReference type="ChEBI" id="CHEBI:15377"/>
        <dbReference type="ChEBI" id="CHEBI:29999"/>
        <dbReference type="ChEBI" id="CHEBI:43474"/>
        <dbReference type="ChEBI" id="CHEBI:83421"/>
        <dbReference type="EC" id="3.1.3.16"/>
    </reaction>
</comment>
<comment type="catalytic activity">
    <reaction>
        <text>O-phospho-L-threonyl-[protein] + H2O = L-threonyl-[protein] + phosphate</text>
        <dbReference type="Rhea" id="RHEA:47004"/>
        <dbReference type="Rhea" id="RHEA-COMP:11060"/>
        <dbReference type="Rhea" id="RHEA-COMP:11605"/>
        <dbReference type="ChEBI" id="CHEBI:15377"/>
        <dbReference type="ChEBI" id="CHEBI:30013"/>
        <dbReference type="ChEBI" id="CHEBI:43474"/>
        <dbReference type="ChEBI" id="CHEBI:61977"/>
        <dbReference type="EC" id="3.1.3.16"/>
    </reaction>
</comment>
<comment type="cofactor">
    <cofactor evidence="1">
        <name>Mg(2+)</name>
        <dbReference type="ChEBI" id="CHEBI:18420"/>
    </cofactor>
    <text evidence="1">Binds 1 Mg(2+) ion per monomer.</text>
</comment>
<comment type="subunit">
    <text evidence="1">Monomer. Interacts with REST.</text>
</comment>
<comment type="subcellular location">
    <subcellularLocation>
        <location evidence="1">Nucleus</location>
    </subcellularLocation>
</comment>
<comment type="tissue specificity">
    <text evidence="4">Expression is restricted to non-neuronal tissues.</text>
</comment>